<keyword id="KW-0274">FAD</keyword>
<keyword id="KW-0285">Flavoprotein</keyword>
<keyword id="KW-0521">NADP</keyword>
<keyword id="KW-0560">Oxidoreductase</keyword>
<protein>
    <recommendedName>
        <fullName evidence="5">4-hydroxybenzoate brominase (decarboxylating)</fullName>
        <ecNumber evidence="3">1.14.19.55</ecNumber>
    </recommendedName>
    <alternativeName>
        <fullName evidence="4">Decarboxylating phenol brominase</fullName>
    </alternativeName>
</protein>
<proteinExistence type="evidence at protein level"/>
<feature type="chain" id="PRO_0000459989" description="4-hydroxybenzoate brominase (decarboxylating)">
    <location>
        <begin position="1"/>
        <end position="515"/>
    </location>
</feature>
<feature type="binding site" evidence="1">
    <location>
        <position position="13"/>
    </location>
    <ligand>
        <name>FAD</name>
        <dbReference type="ChEBI" id="CHEBI:57692"/>
    </ligand>
</feature>
<feature type="binding site" evidence="1">
    <location>
        <position position="32"/>
    </location>
    <ligand>
        <name>FAD</name>
        <dbReference type="ChEBI" id="CHEBI:57692"/>
    </ligand>
</feature>
<feature type="binding site" evidence="1">
    <location>
        <position position="40"/>
    </location>
    <ligand>
        <name>FAD</name>
        <dbReference type="ChEBI" id="CHEBI:57692"/>
    </ligand>
</feature>
<feature type="binding site" evidence="1">
    <location>
        <position position="41"/>
    </location>
    <ligand>
        <name>FAD</name>
        <dbReference type="ChEBI" id="CHEBI:57692"/>
    </ligand>
</feature>
<feature type="binding site" evidence="1">
    <location>
        <position position="51"/>
    </location>
    <ligand>
        <name>FAD</name>
        <dbReference type="ChEBI" id="CHEBI:57692"/>
    </ligand>
</feature>
<feature type="binding site" evidence="1">
    <location>
        <position position="102"/>
    </location>
    <ligand>
        <name>FAD</name>
        <dbReference type="ChEBI" id="CHEBI:57692"/>
    </ligand>
</feature>
<feature type="binding site" evidence="1">
    <location>
        <position position="364"/>
    </location>
    <ligand>
        <name>FAD</name>
        <dbReference type="ChEBI" id="CHEBI:57692"/>
    </ligand>
</feature>
<comment type="function">
    <text evidence="1 3">Brominase involved in the biosynthesis of polybrominated aromatic organic compounds (PubMed:24974229). Catalyzes the bromination of 4-hydroxybenzoate (4-HBA) to 3-bromo-4-hydroxybenzoate, followed by bromination and decarboxylation of 3-bromo-4-hydroxybenzoate to 2,4-dibromophenol (PubMed:24974229). Can also use 3,4-dihydroxybenzoate, with lower efficiency, forming 3-bromo-4,5-dihydroxybenzoate and 3,5-dibromobenzene-1,2-diol (By similarity). Can utilize iodide in vivo leading to the formation of iodophenols, but cannot use chloride (PubMed:24974229).</text>
</comment>
<comment type="catalytic activity">
    <reaction evidence="3">
        <text>2 bromide + 4-hydroxybenzoate + 2 NADPH + 2 O2 + 5 H(+) = 2,4-dibromophenol + CO2 + 2 NADP(+) + 4 H2O</text>
        <dbReference type="Rhea" id="RHEA:56348"/>
        <dbReference type="ChEBI" id="CHEBI:15377"/>
        <dbReference type="ChEBI" id="CHEBI:15378"/>
        <dbReference type="ChEBI" id="CHEBI:15379"/>
        <dbReference type="ChEBI" id="CHEBI:15858"/>
        <dbReference type="ChEBI" id="CHEBI:16526"/>
        <dbReference type="ChEBI" id="CHEBI:17879"/>
        <dbReference type="ChEBI" id="CHEBI:34238"/>
        <dbReference type="ChEBI" id="CHEBI:57783"/>
        <dbReference type="ChEBI" id="CHEBI:58349"/>
        <dbReference type="EC" id="1.14.19.55"/>
    </reaction>
    <physiologicalReaction direction="left-to-right" evidence="3">
        <dbReference type="Rhea" id="RHEA:56349"/>
    </physiologicalReaction>
</comment>
<comment type="catalytic activity">
    <reaction evidence="3">
        <text>bromide + 4-hydroxybenzoate + NADPH + O2 + 2 H(+) = 3-bromo-4-hydroxybenzoate + NADP(+) + 2 H2O</text>
        <dbReference type="Rhea" id="RHEA:56352"/>
        <dbReference type="ChEBI" id="CHEBI:15377"/>
        <dbReference type="ChEBI" id="CHEBI:15378"/>
        <dbReference type="ChEBI" id="CHEBI:15379"/>
        <dbReference type="ChEBI" id="CHEBI:15858"/>
        <dbReference type="ChEBI" id="CHEBI:17879"/>
        <dbReference type="ChEBI" id="CHEBI:57783"/>
        <dbReference type="ChEBI" id="CHEBI:58349"/>
        <dbReference type="ChEBI" id="CHEBI:140203"/>
    </reaction>
    <physiologicalReaction direction="left-to-right" evidence="3">
        <dbReference type="Rhea" id="RHEA:56353"/>
    </physiologicalReaction>
</comment>
<comment type="catalytic activity">
    <reaction evidence="3">
        <text>3-bromo-4-hydroxybenzoate + bromide + NADPH + O2 + 3 H(+) = 2,4-dibromophenol + CO2 + NADP(+) + 2 H2O</text>
        <dbReference type="Rhea" id="RHEA:56356"/>
        <dbReference type="ChEBI" id="CHEBI:15377"/>
        <dbReference type="ChEBI" id="CHEBI:15378"/>
        <dbReference type="ChEBI" id="CHEBI:15379"/>
        <dbReference type="ChEBI" id="CHEBI:15858"/>
        <dbReference type="ChEBI" id="CHEBI:16526"/>
        <dbReference type="ChEBI" id="CHEBI:34238"/>
        <dbReference type="ChEBI" id="CHEBI:57783"/>
        <dbReference type="ChEBI" id="CHEBI:58349"/>
        <dbReference type="ChEBI" id="CHEBI:140203"/>
    </reaction>
    <physiologicalReaction direction="left-to-right" evidence="3">
        <dbReference type="Rhea" id="RHEA:56357"/>
    </physiologicalReaction>
</comment>
<comment type="catalytic activity">
    <reaction evidence="2">
        <text>3,4-dihydroxybenzoate + 2 bromide + 2 NADPH + 2 O2 + 5 H(+) = 3,5-dibromobenzene-1,2-diol + CO2 + 2 NADP(+) + 4 H2O</text>
        <dbReference type="Rhea" id="RHEA:56368"/>
        <dbReference type="ChEBI" id="CHEBI:15377"/>
        <dbReference type="ChEBI" id="CHEBI:15378"/>
        <dbReference type="ChEBI" id="CHEBI:15379"/>
        <dbReference type="ChEBI" id="CHEBI:15858"/>
        <dbReference type="ChEBI" id="CHEBI:16526"/>
        <dbReference type="ChEBI" id="CHEBI:36241"/>
        <dbReference type="ChEBI" id="CHEBI:57783"/>
        <dbReference type="ChEBI" id="CHEBI:58349"/>
        <dbReference type="ChEBI" id="CHEBI:140214"/>
        <dbReference type="EC" id="1.14.19.55"/>
    </reaction>
    <physiologicalReaction direction="left-to-right" evidence="2">
        <dbReference type="Rhea" id="RHEA:56369"/>
    </physiologicalReaction>
</comment>
<comment type="catalytic activity">
    <reaction evidence="2">
        <text>3,4-dihydroxybenzoate + bromide + NADPH + O2 + 2 H(+) = 3-bromo-4,5-dihydroxybenzoate + NADP(+) + 2 H2O</text>
        <dbReference type="Rhea" id="RHEA:56372"/>
        <dbReference type="ChEBI" id="CHEBI:15377"/>
        <dbReference type="ChEBI" id="CHEBI:15378"/>
        <dbReference type="ChEBI" id="CHEBI:15379"/>
        <dbReference type="ChEBI" id="CHEBI:15858"/>
        <dbReference type="ChEBI" id="CHEBI:36241"/>
        <dbReference type="ChEBI" id="CHEBI:57783"/>
        <dbReference type="ChEBI" id="CHEBI:58349"/>
        <dbReference type="ChEBI" id="CHEBI:140211"/>
    </reaction>
    <physiologicalReaction direction="left-to-right" evidence="2">
        <dbReference type="Rhea" id="RHEA:56373"/>
    </physiologicalReaction>
</comment>
<comment type="catalytic activity">
    <reaction evidence="2">
        <text>3-bromo-4,5-dihydroxybenzoate + bromide + NADPH + O2 + 3 H(+) = 3,5-dibromobenzene-1,2-diol + CO2 + NADP(+) + 2 H2O</text>
        <dbReference type="Rhea" id="RHEA:56376"/>
        <dbReference type="ChEBI" id="CHEBI:15377"/>
        <dbReference type="ChEBI" id="CHEBI:15378"/>
        <dbReference type="ChEBI" id="CHEBI:15379"/>
        <dbReference type="ChEBI" id="CHEBI:15858"/>
        <dbReference type="ChEBI" id="CHEBI:16526"/>
        <dbReference type="ChEBI" id="CHEBI:57783"/>
        <dbReference type="ChEBI" id="CHEBI:58349"/>
        <dbReference type="ChEBI" id="CHEBI:140211"/>
        <dbReference type="ChEBI" id="CHEBI:140214"/>
    </reaction>
    <physiologicalReaction direction="left-to-right" evidence="2">
        <dbReference type="Rhea" id="RHEA:56377"/>
    </physiologicalReaction>
</comment>
<comment type="cofactor">
    <cofactor evidence="1">
        <name>FAD</name>
        <dbReference type="ChEBI" id="CHEBI:57692"/>
    </cofactor>
</comment>
<comment type="activity regulation">
    <text evidence="3">Activity is abolished in the absence of either bromide or NADPH, while a partial reduction in activity is observed upon omission of FAD (PubMed:24974229). Activity does not require the addition of a flavin reductase to regenerate FADH(2) in situ (PubMed:24974229).</text>
</comment>
<comment type="disruption phenotype">
    <text evidence="3">Deletion of the gene abolishes the production of bromophenol-containing species.</text>
</comment>
<comment type="similarity">
    <text evidence="5">Belongs to the FMO family.</text>
</comment>
<gene>
    <name evidence="4" type="primary">bmp5</name>
    <name evidence="6" type="ORF">PL2TA16_01239</name>
</gene>
<reference key="1">
    <citation type="journal article" date="2014" name="Nat. Chem. Biol.">
        <title>Biosynthesis of polybrominated aromatic organic compounds by marine bacteria.</title>
        <authorList>
            <person name="Agarwal V."/>
            <person name="El Gamal A.A."/>
            <person name="Yamanaka K."/>
            <person name="Poth D."/>
            <person name="Kersten R.D."/>
            <person name="Schorn M."/>
            <person name="Allen E.E."/>
            <person name="Moore B.S."/>
        </authorList>
    </citation>
    <scope>NUCLEOTIDE SEQUENCE [LARGE SCALE GENOMIC DNA]</scope>
    <scope>FUNCTION</scope>
    <scope>CATALYTIC ACTIVITY</scope>
    <scope>ACTIVITY REGULATION</scope>
    <scope>DISRUPTION PHENOTYPE</scope>
    <source>
        <strain>2ta16</strain>
    </source>
</reference>
<dbReference type="EC" id="1.14.19.55" evidence="3"/>
<dbReference type="EMBL" id="AUSV01000133">
    <property type="protein sequence ID" value="ESP90848.1"/>
    <property type="molecule type" value="Genomic_DNA"/>
</dbReference>
<dbReference type="RefSeq" id="WP_023401494.1">
    <property type="nucleotide sequence ID" value="NZ_AUSV01000133.1"/>
</dbReference>
<dbReference type="SMR" id="V4HM83"/>
<dbReference type="PATRIC" id="fig|1353533.3.peg.4658"/>
<dbReference type="BioCyc" id="MetaCyc:MONOMER-20311"/>
<dbReference type="Proteomes" id="UP000017820">
    <property type="component" value="Unassembled WGS sequence"/>
</dbReference>
<dbReference type="GO" id="GO:0050660">
    <property type="term" value="F:flavin adenine dinucleotide binding"/>
    <property type="evidence" value="ECO:0007669"/>
    <property type="project" value="InterPro"/>
</dbReference>
<dbReference type="GO" id="GO:0004499">
    <property type="term" value="F:N,N-dimethylaniline monooxygenase activity"/>
    <property type="evidence" value="ECO:0007669"/>
    <property type="project" value="InterPro"/>
</dbReference>
<dbReference type="GO" id="GO:0050661">
    <property type="term" value="F:NADP binding"/>
    <property type="evidence" value="ECO:0007669"/>
    <property type="project" value="InterPro"/>
</dbReference>
<dbReference type="FunFam" id="3.50.50.60:FF:000023">
    <property type="entry name" value="Dimethylaniline monooxygenase [N-oxide-forming]"/>
    <property type="match status" value="1"/>
</dbReference>
<dbReference type="Gene3D" id="3.50.50.60">
    <property type="entry name" value="FAD/NAD(P)-binding domain"/>
    <property type="match status" value="1"/>
</dbReference>
<dbReference type="InterPro" id="IPR036188">
    <property type="entry name" value="FAD/NAD-bd_sf"/>
</dbReference>
<dbReference type="InterPro" id="IPR000960">
    <property type="entry name" value="Flavin_mOase"/>
</dbReference>
<dbReference type="InterPro" id="IPR020946">
    <property type="entry name" value="Flavin_mOase-like"/>
</dbReference>
<dbReference type="InterPro" id="IPR050346">
    <property type="entry name" value="FMO-like"/>
</dbReference>
<dbReference type="PANTHER" id="PTHR23023">
    <property type="entry name" value="DIMETHYLANILINE MONOOXYGENASE"/>
    <property type="match status" value="1"/>
</dbReference>
<dbReference type="Pfam" id="PF00743">
    <property type="entry name" value="FMO-like"/>
    <property type="match status" value="1"/>
</dbReference>
<dbReference type="PIRSF" id="PIRSF000332">
    <property type="entry name" value="FMO"/>
    <property type="match status" value="1"/>
</dbReference>
<dbReference type="PRINTS" id="PR00370">
    <property type="entry name" value="FMOXYGENASE"/>
</dbReference>
<dbReference type="SUPFAM" id="SSF51905">
    <property type="entry name" value="FAD/NAD(P)-binding domain"/>
    <property type="match status" value="2"/>
</dbReference>
<organism>
    <name type="scientific">Pseudoalteromonas luteoviolacea (strain 2ta16)</name>
    <dbReference type="NCBI Taxonomy" id="1353533"/>
    <lineage>
        <taxon>Bacteria</taxon>
        <taxon>Pseudomonadati</taxon>
        <taxon>Pseudomonadota</taxon>
        <taxon>Gammaproteobacteria</taxon>
        <taxon>Alteromonadales</taxon>
        <taxon>Pseudoalteromonadaceae</taxon>
        <taxon>Pseudoalteromonas</taxon>
    </lineage>
</organism>
<name>BMP5_PSEL2</name>
<sequence length="515" mass="58865">MNKTIAVIGAGLSGIAAVKQLTDGGHQVTCFEKAESFGGVFADKKIYDDLHLTISNYFMAYSDYVPNHQKLKFWSKKEYINYLGEYIERFDIAKHIHYDHEVCCVQKQGDKWLVTYKNADTEQTKEFDMVAVCSGHFQKPKLPDLPGLDMYQGNIEHSNDYRDKHNYAGKRVLCVGLGESSADITSEISQVARKCILSLRRYPAVAPRYMAFQEDPYFTIDTSWLTSRIVNKLPHRYHGGITKGIFNKYVTSRNDHVRIRGEWLKKSGPSHHQAVTKNERLFRPIADGKVTPNIGGIERFEKNAVVFKDGTREEIDAVVFCTGYQLSFPFLDVSIANMRDLYKQMFIPEMGHSLSFIGFVRPQQGGIPVIAEMQCRYLSKLASGEAQLPTLSEMHDVIKYDTKHWQTEYKITPHVASLVNYCHYMDSVAKLVGCMPQIPSLFKDPMLRVKLLHNPQFAAQYRLDGPNNMTHTAREFLLSFPNISSWPRIIHFEVALAAQKLLSRLRLDGLREISK</sequence>
<accession>V4HM83</accession>
<evidence type="ECO:0000250" key="1">
    <source>
        <dbReference type="UniProtKB" id="A3SLM3"/>
    </source>
</evidence>
<evidence type="ECO:0000250" key="2">
    <source>
        <dbReference type="UniProtKB" id="F2K079"/>
    </source>
</evidence>
<evidence type="ECO:0000269" key="3">
    <source>
    </source>
</evidence>
<evidence type="ECO:0000303" key="4">
    <source>
    </source>
</evidence>
<evidence type="ECO:0000305" key="5"/>
<evidence type="ECO:0000312" key="6">
    <source>
        <dbReference type="EMBL" id="ESP90848.1"/>
    </source>
</evidence>